<protein>
    <recommendedName>
        <fullName evidence="1">Ribulose bisphosphate carboxylase large chain</fullName>
        <shortName evidence="1">RuBisCO large subunit</shortName>
        <ecNumber evidence="1">4.1.1.39</ecNumber>
    </recommendedName>
</protein>
<evidence type="ECO:0000255" key="1">
    <source>
        <dbReference type="HAMAP-Rule" id="MF_01338"/>
    </source>
</evidence>
<comment type="function">
    <text evidence="1">RuBisCO catalyzes two reactions: the carboxylation of D-ribulose 1,5-bisphosphate, the primary event in carbon dioxide fixation, as well as the oxidative fragmentation of the pentose substrate in the photorespiration process. Both reactions occur simultaneously and in competition at the same active site.</text>
</comment>
<comment type="catalytic activity">
    <reaction evidence="1">
        <text>2 (2R)-3-phosphoglycerate + 2 H(+) = D-ribulose 1,5-bisphosphate + CO2 + H2O</text>
        <dbReference type="Rhea" id="RHEA:23124"/>
        <dbReference type="ChEBI" id="CHEBI:15377"/>
        <dbReference type="ChEBI" id="CHEBI:15378"/>
        <dbReference type="ChEBI" id="CHEBI:16526"/>
        <dbReference type="ChEBI" id="CHEBI:57870"/>
        <dbReference type="ChEBI" id="CHEBI:58272"/>
        <dbReference type="EC" id="4.1.1.39"/>
    </reaction>
</comment>
<comment type="catalytic activity">
    <reaction evidence="1">
        <text>D-ribulose 1,5-bisphosphate + O2 = 2-phosphoglycolate + (2R)-3-phosphoglycerate + 2 H(+)</text>
        <dbReference type="Rhea" id="RHEA:36631"/>
        <dbReference type="ChEBI" id="CHEBI:15378"/>
        <dbReference type="ChEBI" id="CHEBI:15379"/>
        <dbReference type="ChEBI" id="CHEBI:57870"/>
        <dbReference type="ChEBI" id="CHEBI:58033"/>
        <dbReference type="ChEBI" id="CHEBI:58272"/>
    </reaction>
</comment>
<comment type="cofactor">
    <cofactor evidence="1">
        <name>Mg(2+)</name>
        <dbReference type="ChEBI" id="CHEBI:18420"/>
    </cofactor>
    <text evidence="1">Binds 1 Mg(2+) ion per subunit.</text>
</comment>
<comment type="subunit">
    <text evidence="1">Heterohexadecamer of 8 large chains and 8 small chains.</text>
</comment>
<comment type="subcellular location">
    <subcellularLocation>
        <location>Plastid</location>
        <location>Chloroplast</location>
    </subcellularLocation>
</comment>
<comment type="miscellaneous">
    <text evidence="1">The basic functional RuBisCO is composed of a large chain homodimer in a 'head-to-tail' conformation. In form I RuBisCO this homodimer is arranged in a barrel-like tetramer with the small subunits forming a tetrameric 'cap' on each end of the 'barrel'.</text>
</comment>
<comment type="similarity">
    <text evidence="1">Belongs to the RuBisCO large chain family. Type I subfamily.</text>
</comment>
<keyword id="KW-0113">Calvin cycle</keyword>
<keyword id="KW-0120">Carbon dioxide fixation</keyword>
<keyword id="KW-0150">Chloroplast</keyword>
<keyword id="KW-0456">Lyase</keyword>
<keyword id="KW-0460">Magnesium</keyword>
<keyword id="KW-0479">Metal-binding</keyword>
<keyword id="KW-0503">Monooxygenase</keyword>
<keyword id="KW-0560">Oxidoreductase</keyword>
<keyword id="KW-0601">Photorespiration</keyword>
<keyword id="KW-0602">Photosynthesis</keyword>
<keyword id="KW-0934">Plastid</keyword>
<name>RBL_TRICV</name>
<gene>
    <name evidence="1" type="primary">rbcL</name>
</gene>
<reference key="1">
    <citation type="journal article" date="1995" name="Plant Mol. Biol. Rep.">
        <title>The chloroplast genome of a chlorophyll a+c-containing alga, Odontella sinensis.</title>
        <authorList>
            <person name="Kowallik K.V."/>
            <person name="Stoebe B."/>
            <person name="Schaffran I."/>
            <person name="Kroth-Pancic P."/>
            <person name="Freier U."/>
        </authorList>
    </citation>
    <scope>NUCLEOTIDE SEQUENCE [LARGE SCALE GENOMIC DNA]</scope>
</reference>
<organism>
    <name type="scientific">Trieres chinensis</name>
    <name type="common">Marine centric diatom</name>
    <name type="synonym">Odontella sinensis</name>
    <dbReference type="NCBI Taxonomy" id="1514140"/>
    <lineage>
        <taxon>Eukaryota</taxon>
        <taxon>Sar</taxon>
        <taxon>Stramenopiles</taxon>
        <taxon>Ochrophyta</taxon>
        <taxon>Bacillariophyta</taxon>
        <taxon>Mediophyceae</taxon>
        <taxon>Biddulphiophycidae</taxon>
        <taxon>Eupodiscales</taxon>
        <taxon>Parodontellaceae</taxon>
        <taxon>Trieres</taxon>
    </lineage>
</organism>
<sequence length="490" mass="54052">MSQSVSERTRIKSDRYESGVIPYAKMGYWDASYTVQDTDVLALFRITPQPGVDPVEAAAAVAGESSTATWTVVWTDLLTACERYRAKAYRVDPVPNTTDQYFAFIAYECDLFEEGSLANLTASIIGNVFGFKAVAALRLEDMRIPYAYLKTFQGPATGIVVERERLNKYGAPLLGATVKPKLGLSGKNYGRVVYEGLKGGLDFLKDDENINSQPFMRWRERFLYCLEGINRASAATGEVKGSYLNITAATMEEVYKRADYAKQIGSVIVIIDLVMGYTAIQSAAIWARDNDMLLHLHRAGNSTYARQKNHGINFRVICKWMRMSGVDHIHAGTVVGKLEGDPLMIKGFYDVLRLTTLDVNLPYGIFFDMSWASLRKCMPVASGGIHCGQMHQLIHYLGDDVVLQFGGGTIGHPDGIQAGATANRVALEAMVLARNEGADYFNPQVGPQILREAAKKCGPLQTALDLWKDISFNYTSTDTADFAETPTANV</sequence>
<feature type="chain" id="PRO_0000062548" description="Ribulose bisphosphate carboxylase large chain">
    <location>
        <begin position="1"/>
        <end position="490"/>
    </location>
</feature>
<feature type="active site" description="Proton acceptor" evidence="1">
    <location>
        <position position="179"/>
    </location>
</feature>
<feature type="active site" description="Proton acceptor" evidence="1">
    <location>
        <position position="297"/>
    </location>
</feature>
<feature type="binding site" description="in homodimeric partner" evidence="1">
    <location>
        <position position="127"/>
    </location>
    <ligand>
        <name>substrate</name>
    </ligand>
</feature>
<feature type="binding site" evidence="1">
    <location>
        <position position="177"/>
    </location>
    <ligand>
        <name>substrate</name>
    </ligand>
</feature>
<feature type="binding site" evidence="1">
    <location>
        <position position="181"/>
    </location>
    <ligand>
        <name>substrate</name>
    </ligand>
</feature>
<feature type="binding site" description="via carbamate group" evidence="1">
    <location>
        <position position="205"/>
    </location>
    <ligand>
        <name>Mg(2+)</name>
        <dbReference type="ChEBI" id="CHEBI:18420"/>
    </ligand>
</feature>
<feature type="binding site" evidence="1">
    <location>
        <position position="207"/>
    </location>
    <ligand>
        <name>Mg(2+)</name>
        <dbReference type="ChEBI" id="CHEBI:18420"/>
    </ligand>
</feature>
<feature type="binding site" evidence="1">
    <location>
        <position position="208"/>
    </location>
    <ligand>
        <name>Mg(2+)</name>
        <dbReference type="ChEBI" id="CHEBI:18420"/>
    </ligand>
</feature>
<feature type="binding site" evidence="1">
    <location>
        <position position="298"/>
    </location>
    <ligand>
        <name>substrate</name>
    </ligand>
</feature>
<feature type="binding site" evidence="1">
    <location>
        <position position="330"/>
    </location>
    <ligand>
        <name>substrate</name>
    </ligand>
</feature>
<feature type="binding site" evidence="1">
    <location>
        <position position="382"/>
    </location>
    <ligand>
        <name>substrate</name>
    </ligand>
</feature>
<feature type="site" description="Transition state stabilizer" evidence="1">
    <location>
        <position position="337"/>
    </location>
</feature>
<feature type="modified residue" description="N6-carboxylysine" evidence="1">
    <location>
        <position position="205"/>
    </location>
</feature>
<geneLocation type="chloroplast"/>
<accession>P49520</accession>
<proteinExistence type="inferred from homology"/>
<dbReference type="EC" id="4.1.1.39" evidence="1"/>
<dbReference type="EMBL" id="Z67753">
    <property type="protein sequence ID" value="CAA91686.1"/>
    <property type="molecule type" value="Genomic_DNA"/>
</dbReference>
<dbReference type="PIR" id="S78313">
    <property type="entry name" value="S78313"/>
</dbReference>
<dbReference type="RefSeq" id="NP_043654.1">
    <property type="nucleotide sequence ID" value="NC_001713.1"/>
</dbReference>
<dbReference type="SMR" id="P49520"/>
<dbReference type="GeneID" id="801798"/>
<dbReference type="GO" id="GO:0009507">
    <property type="term" value="C:chloroplast"/>
    <property type="evidence" value="ECO:0007669"/>
    <property type="project" value="UniProtKB-SubCell"/>
</dbReference>
<dbReference type="GO" id="GO:0000287">
    <property type="term" value="F:magnesium ion binding"/>
    <property type="evidence" value="ECO:0007669"/>
    <property type="project" value="UniProtKB-UniRule"/>
</dbReference>
<dbReference type="GO" id="GO:0004497">
    <property type="term" value="F:monooxygenase activity"/>
    <property type="evidence" value="ECO:0007669"/>
    <property type="project" value="UniProtKB-KW"/>
</dbReference>
<dbReference type="GO" id="GO:0016984">
    <property type="term" value="F:ribulose-bisphosphate carboxylase activity"/>
    <property type="evidence" value="ECO:0007669"/>
    <property type="project" value="UniProtKB-UniRule"/>
</dbReference>
<dbReference type="GO" id="GO:0019253">
    <property type="term" value="P:reductive pentose-phosphate cycle"/>
    <property type="evidence" value="ECO:0007669"/>
    <property type="project" value="UniProtKB-UniRule"/>
</dbReference>
<dbReference type="CDD" id="cd08212">
    <property type="entry name" value="RuBisCO_large_I"/>
    <property type="match status" value="1"/>
</dbReference>
<dbReference type="Gene3D" id="3.20.20.110">
    <property type="entry name" value="Ribulose bisphosphate carboxylase, large subunit, C-terminal domain"/>
    <property type="match status" value="1"/>
</dbReference>
<dbReference type="Gene3D" id="3.30.70.150">
    <property type="entry name" value="RuBisCO large subunit, N-terminal domain"/>
    <property type="match status" value="1"/>
</dbReference>
<dbReference type="HAMAP" id="MF_01338">
    <property type="entry name" value="RuBisCO_L_type1"/>
    <property type="match status" value="1"/>
</dbReference>
<dbReference type="InterPro" id="IPR033966">
    <property type="entry name" value="RuBisCO"/>
</dbReference>
<dbReference type="InterPro" id="IPR020878">
    <property type="entry name" value="RuBisCo_large_chain_AS"/>
</dbReference>
<dbReference type="InterPro" id="IPR000685">
    <property type="entry name" value="RuBisCO_lsu_C"/>
</dbReference>
<dbReference type="InterPro" id="IPR036376">
    <property type="entry name" value="RuBisCO_lsu_C_sf"/>
</dbReference>
<dbReference type="InterPro" id="IPR017443">
    <property type="entry name" value="RuBisCO_lsu_fd_N"/>
</dbReference>
<dbReference type="InterPro" id="IPR036422">
    <property type="entry name" value="RuBisCO_lsu_N_sf"/>
</dbReference>
<dbReference type="InterPro" id="IPR020888">
    <property type="entry name" value="RuBisCO_lsuI"/>
</dbReference>
<dbReference type="NCBIfam" id="NF003252">
    <property type="entry name" value="PRK04208.1"/>
    <property type="match status" value="1"/>
</dbReference>
<dbReference type="PANTHER" id="PTHR42704">
    <property type="entry name" value="RIBULOSE BISPHOSPHATE CARBOXYLASE"/>
    <property type="match status" value="1"/>
</dbReference>
<dbReference type="PANTHER" id="PTHR42704:SF17">
    <property type="entry name" value="RIBULOSE BISPHOSPHATE CARBOXYLASE LARGE CHAIN"/>
    <property type="match status" value="1"/>
</dbReference>
<dbReference type="Pfam" id="PF00016">
    <property type="entry name" value="RuBisCO_large"/>
    <property type="match status" value="1"/>
</dbReference>
<dbReference type="Pfam" id="PF02788">
    <property type="entry name" value="RuBisCO_large_N"/>
    <property type="match status" value="1"/>
</dbReference>
<dbReference type="SFLD" id="SFLDG01052">
    <property type="entry name" value="RuBisCO"/>
    <property type="match status" value="1"/>
</dbReference>
<dbReference type="SFLD" id="SFLDS00014">
    <property type="entry name" value="RuBisCO"/>
    <property type="match status" value="1"/>
</dbReference>
<dbReference type="SFLD" id="SFLDG00301">
    <property type="entry name" value="RuBisCO-like_proteins"/>
    <property type="match status" value="1"/>
</dbReference>
<dbReference type="SUPFAM" id="SSF51649">
    <property type="entry name" value="RuBisCo, C-terminal domain"/>
    <property type="match status" value="1"/>
</dbReference>
<dbReference type="SUPFAM" id="SSF54966">
    <property type="entry name" value="RuBisCO, large subunit, small (N-terminal) domain"/>
    <property type="match status" value="1"/>
</dbReference>
<dbReference type="PROSITE" id="PS00157">
    <property type="entry name" value="RUBISCO_LARGE"/>
    <property type="match status" value="1"/>
</dbReference>